<dbReference type="EMBL" id="AM933172">
    <property type="protein sequence ID" value="CAR35229.1"/>
    <property type="molecule type" value="Genomic_DNA"/>
</dbReference>
<dbReference type="RefSeq" id="WP_000060081.1">
    <property type="nucleotide sequence ID" value="NC_011294.1"/>
</dbReference>
<dbReference type="SMR" id="B5QUP8"/>
<dbReference type="KEGG" id="set:SEN3653"/>
<dbReference type="HOGENOM" id="CLU_040267_0_0_6"/>
<dbReference type="Proteomes" id="UP000000613">
    <property type="component" value="Chromosome"/>
</dbReference>
<dbReference type="GO" id="GO:0005737">
    <property type="term" value="C:cytoplasm"/>
    <property type="evidence" value="ECO:0007669"/>
    <property type="project" value="UniProtKB-SubCell"/>
</dbReference>
<dbReference type="GO" id="GO:0005524">
    <property type="term" value="F:ATP binding"/>
    <property type="evidence" value="ECO:0007669"/>
    <property type="project" value="UniProtKB-UniRule"/>
</dbReference>
<dbReference type="GO" id="GO:0003697">
    <property type="term" value="F:single-stranded DNA binding"/>
    <property type="evidence" value="ECO:0007669"/>
    <property type="project" value="UniProtKB-UniRule"/>
</dbReference>
<dbReference type="GO" id="GO:0006260">
    <property type="term" value="P:DNA replication"/>
    <property type="evidence" value="ECO:0007669"/>
    <property type="project" value="UniProtKB-UniRule"/>
</dbReference>
<dbReference type="GO" id="GO:0000731">
    <property type="term" value="P:DNA synthesis involved in DNA repair"/>
    <property type="evidence" value="ECO:0007669"/>
    <property type="project" value="TreeGrafter"/>
</dbReference>
<dbReference type="GO" id="GO:0006302">
    <property type="term" value="P:double-strand break repair"/>
    <property type="evidence" value="ECO:0007669"/>
    <property type="project" value="TreeGrafter"/>
</dbReference>
<dbReference type="GO" id="GO:0009432">
    <property type="term" value="P:SOS response"/>
    <property type="evidence" value="ECO:0007669"/>
    <property type="project" value="UniProtKB-UniRule"/>
</dbReference>
<dbReference type="FunFam" id="1.20.1050.90:FF:000001">
    <property type="entry name" value="DNA replication and repair protein RecF"/>
    <property type="match status" value="1"/>
</dbReference>
<dbReference type="Gene3D" id="3.40.50.300">
    <property type="entry name" value="P-loop containing nucleotide triphosphate hydrolases"/>
    <property type="match status" value="1"/>
</dbReference>
<dbReference type="Gene3D" id="1.20.1050.90">
    <property type="entry name" value="RecF/RecN/SMC, N-terminal domain"/>
    <property type="match status" value="1"/>
</dbReference>
<dbReference type="HAMAP" id="MF_00365">
    <property type="entry name" value="RecF"/>
    <property type="match status" value="1"/>
</dbReference>
<dbReference type="InterPro" id="IPR001238">
    <property type="entry name" value="DNA-binding_RecF"/>
</dbReference>
<dbReference type="InterPro" id="IPR018078">
    <property type="entry name" value="DNA-binding_RecF_CS"/>
</dbReference>
<dbReference type="InterPro" id="IPR027417">
    <property type="entry name" value="P-loop_NTPase"/>
</dbReference>
<dbReference type="InterPro" id="IPR003395">
    <property type="entry name" value="RecF/RecN/SMC_N"/>
</dbReference>
<dbReference type="InterPro" id="IPR042174">
    <property type="entry name" value="RecF_2"/>
</dbReference>
<dbReference type="NCBIfam" id="TIGR00611">
    <property type="entry name" value="recf"/>
    <property type="match status" value="1"/>
</dbReference>
<dbReference type="PANTHER" id="PTHR32182">
    <property type="entry name" value="DNA REPLICATION AND REPAIR PROTEIN RECF"/>
    <property type="match status" value="1"/>
</dbReference>
<dbReference type="PANTHER" id="PTHR32182:SF0">
    <property type="entry name" value="DNA REPLICATION AND REPAIR PROTEIN RECF"/>
    <property type="match status" value="1"/>
</dbReference>
<dbReference type="Pfam" id="PF02463">
    <property type="entry name" value="SMC_N"/>
    <property type="match status" value="1"/>
</dbReference>
<dbReference type="SUPFAM" id="SSF52540">
    <property type="entry name" value="P-loop containing nucleoside triphosphate hydrolases"/>
    <property type="match status" value="1"/>
</dbReference>
<dbReference type="PROSITE" id="PS00617">
    <property type="entry name" value="RECF_1"/>
    <property type="match status" value="1"/>
</dbReference>
<dbReference type="PROSITE" id="PS00618">
    <property type="entry name" value="RECF_2"/>
    <property type="match status" value="1"/>
</dbReference>
<comment type="function">
    <text evidence="1">The RecF protein is involved in DNA metabolism; it is required for DNA replication and normal SOS inducibility. RecF binds preferentially to single-stranded, linear DNA. It also seems to bind ATP.</text>
</comment>
<comment type="subcellular location">
    <subcellularLocation>
        <location evidence="1">Cytoplasm</location>
    </subcellularLocation>
</comment>
<comment type="similarity">
    <text evidence="1">Belongs to the RecF family.</text>
</comment>
<gene>
    <name evidence="1" type="primary">recF</name>
    <name type="ordered locus">SEN3653</name>
</gene>
<feature type="chain" id="PRO_1000121148" description="DNA replication and repair protein RecF">
    <location>
        <begin position="1"/>
        <end position="357"/>
    </location>
</feature>
<feature type="binding site" evidence="1">
    <location>
        <begin position="30"/>
        <end position="37"/>
    </location>
    <ligand>
        <name>ATP</name>
        <dbReference type="ChEBI" id="CHEBI:30616"/>
    </ligand>
</feature>
<organism>
    <name type="scientific">Salmonella enteritidis PT4 (strain P125109)</name>
    <dbReference type="NCBI Taxonomy" id="550537"/>
    <lineage>
        <taxon>Bacteria</taxon>
        <taxon>Pseudomonadati</taxon>
        <taxon>Pseudomonadota</taxon>
        <taxon>Gammaproteobacteria</taxon>
        <taxon>Enterobacterales</taxon>
        <taxon>Enterobacteriaceae</taxon>
        <taxon>Salmonella</taxon>
    </lineage>
</organism>
<proteinExistence type="inferred from homology"/>
<protein>
    <recommendedName>
        <fullName evidence="1">DNA replication and repair protein RecF</fullName>
    </recommendedName>
</protein>
<sequence>MSLTRLLIKDFRNIENADLALSPGFNFLVGANGSGKTSVLEAIYTLGHGRAFRSLQPGRVIRHEQEAFVLHGRLQGEERETSIGLTKDKQGDSKVRIDGTDGHKIAELAHLMPMQLITPEGFTLLNGGPKYRRAFLDWGCFHNEAGFFTAWSNLKRLLKQRNAALRQVSRYEQLRPWDKELIPLAEQISTWRAEYSSAIAQDMADTCQQFLPEFSLTFSFQRGWEKETDYADVLERSFERDRMLTYTAHGPHKADFRIRADGAPVEDTLSRGQLKLLMCALRLAQGEFLTRESGRRCLYLIDDFASELDDARRGLLASRLKATQSQVFVSAISAEHVIDMSDENSKMFTVEKGKITD</sequence>
<reference key="1">
    <citation type="journal article" date="2008" name="Genome Res.">
        <title>Comparative genome analysis of Salmonella enteritidis PT4 and Salmonella gallinarum 287/91 provides insights into evolutionary and host adaptation pathways.</title>
        <authorList>
            <person name="Thomson N.R."/>
            <person name="Clayton D.J."/>
            <person name="Windhorst D."/>
            <person name="Vernikos G."/>
            <person name="Davidson S."/>
            <person name="Churcher C."/>
            <person name="Quail M.A."/>
            <person name="Stevens M."/>
            <person name="Jones M.A."/>
            <person name="Watson M."/>
            <person name="Barron A."/>
            <person name="Layton A."/>
            <person name="Pickard D."/>
            <person name="Kingsley R.A."/>
            <person name="Bignell A."/>
            <person name="Clark L."/>
            <person name="Harris B."/>
            <person name="Ormond D."/>
            <person name="Abdellah Z."/>
            <person name="Brooks K."/>
            <person name="Cherevach I."/>
            <person name="Chillingworth T."/>
            <person name="Woodward J."/>
            <person name="Norberczak H."/>
            <person name="Lord A."/>
            <person name="Arrowsmith C."/>
            <person name="Jagels K."/>
            <person name="Moule S."/>
            <person name="Mungall K."/>
            <person name="Saunders M."/>
            <person name="Whitehead S."/>
            <person name="Chabalgoity J.A."/>
            <person name="Maskell D."/>
            <person name="Humphreys T."/>
            <person name="Roberts M."/>
            <person name="Barrow P.A."/>
            <person name="Dougan G."/>
            <person name="Parkhill J."/>
        </authorList>
    </citation>
    <scope>NUCLEOTIDE SEQUENCE [LARGE SCALE GENOMIC DNA]</scope>
    <source>
        <strain>P125109</strain>
    </source>
</reference>
<evidence type="ECO:0000255" key="1">
    <source>
        <dbReference type="HAMAP-Rule" id="MF_00365"/>
    </source>
</evidence>
<accession>B5QUP8</accession>
<keyword id="KW-0067">ATP-binding</keyword>
<keyword id="KW-0963">Cytoplasm</keyword>
<keyword id="KW-0227">DNA damage</keyword>
<keyword id="KW-0234">DNA repair</keyword>
<keyword id="KW-0235">DNA replication</keyword>
<keyword id="KW-0238">DNA-binding</keyword>
<keyword id="KW-0547">Nucleotide-binding</keyword>
<keyword id="KW-0742">SOS response</keyword>
<name>RECF_SALEP</name>